<gene>
    <name type="primary">polr2l</name>
    <name type="synonym">rpb10</name>
    <name type="ORF">DDB_G0272036</name>
</gene>
<evidence type="ECO:0000250" key="1"/>
<evidence type="ECO:0000250" key="2">
    <source>
        <dbReference type="UniProtKB" id="P22139"/>
    </source>
</evidence>
<evidence type="ECO:0000305" key="3"/>
<reference key="1">
    <citation type="journal article" date="2002" name="Nature">
        <title>Sequence and analysis of chromosome 2 of Dictyostelium discoideum.</title>
        <authorList>
            <person name="Gloeckner G."/>
            <person name="Eichinger L."/>
            <person name="Szafranski K."/>
            <person name="Pachebat J.A."/>
            <person name="Bankier A.T."/>
            <person name="Dear P.H."/>
            <person name="Lehmann R."/>
            <person name="Baumgart C."/>
            <person name="Parra G."/>
            <person name="Abril J.F."/>
            <person name="Guigo R."/>
            <person name="Kumpf K."/>
            <person name="Tunggal B."/>
            <person name="Cox E.C."/>
            <person name="Quail M.A."/>
            <person name="Platzer M."/>
            <person name="Rosenthal A."/>
            <person name="Noegel A.A."/>
        </authorList>
    </citation>
    <scope>NUCLEOTIDE SEQUENCE [LARGE SCALE GENOMIC DNA]</scope>
    <source>
        <strain>AX4</strain>
    </source>
</reference>
<reference key="2">
    <citation type="journal article" date="2005" name="Nature">
        <title>The genome of the social amoeba Dictyostelium discoideum.</title>
        <authorList>
            <person name="Eichinger L."/>
            <person name="Pachebat J.A."/>
            <person name="Gloeckner G."/>
            <person name="Rajandream M.A."/>
            <person name="Sucgang R."/>
            <person name="Berriman M."/>
            <person name="Song J."/>
            <person name="Olsen R."/>
            <person name="Szafranski K."/>
            <person name="Xu Q."/>
            <person name="Tunggal B."/>
            <person name="Kummerfeld S."/>
            <person name="Madera M."/>
            <person name="Konfortov B.A."/>
            <person name="Rivero F."/>
            <person name="Bankier A.T."/>
            <person name="Lehmann R."/>
            <person name="Hamlin N."/>
            <person name="Davies R."/>
            <person name="Gaudet P."/>
            <person name="Fey P."/>
            <person name="Pilcher K."/>
            <person name="Chen G."/>
            <person name="Saunders D."/>
            <person name="Sodergren E.J."/>
            <person name="Davis P."/>
            <person name="Kerhornou A."/>
            <person name="Nie X."/>
            <person name="Hall N."/>
            <person name="Anjard C."/>
            <person name="Hemphill L."/>
            <person name="Bason N."/>
            <person name="Farbrother P."/>
            <person name="Desany B."/>
            <person name="Just E."/>
            <person name="Morio T."/>
            <person name="Rost R."/>
            <person name="Churcher C.M."/>
            <person name="Cooper J."/>
            <person name="Haydock S."/>
            <person name="van Driessche N."/>
            <person name="Cronin A."/>
            <person name="Goodhead I."/>
            <person name="Muzny D.M."/>
            <person name="Mourier T."/>
            <person name="Pain A."/>
            <person name="Lu M."/>
            <person name="Harper D."/>
            <person name="Lindsay R."/>
            <person name="Hauser H."/>
            <person name="James K.D."/>
            <person name="Quiles M."/>
            <person name="Madan Babu M."/>
            <person name="Saito T."/>
            <person name="Buchrieser C."/>
            <person name="Wardroper A."/>
            <person name="Felder M."/>
            <person name="Thangavelu M."/>
            <person name="Johnson D."/>
            <person name="Knights A."/>
            <person name="Loulseged H."/>
            <person name="Mungall K.L."/>
            <person name="Oliver K."/>
            <person name="Price C."/>
            <person name="Quail M.A."/>
            <person name="Urushihara H."/>
            <person name="Hernandez J."/>
            <person name="Rabbinowitsch E."/>
            <person name="Steffen D."/>
            <person name="Sanders M."/>
            <person name="Ma J."/>
            <person name="Kohara Y."/>
            <person name="Sharp S."/>
            <person name="Simmonds M.N."/>
            <person name="Spiegler S."/>
            <person name="Tivey A."/>
            <person name="Sugano S."/>
            <person name="White B."/>
            <person name="Walker D."/>
            <person name="Woodward J.R."/>
            <person name="Winckler T."/>
            <person name="Tanaka Y."/>
            <person name="Shaulsky G."/>
            <person name="Schleicher M."/>
            <person name="Weinstock G.M."/>
            <person name="Rosenthal A."/>
            <person name="Cox E.C."/>
            <person name="Chisholm R.L."/>
            <person name="Gibbs R.A."/>
            <person name="Loomis W.F."/>
            <person name="Platzer M."/>
            <person name="Kay R.R."/>
            <person name="Williams J.G."/>
            <person name="Dear P.H."/>
            <person name="Noegel A.A."/>
            <person name="Barrell B.G."/>
            <person name="Kuspa A."/>
        </authorList>
    </citation>
    <scope>NUCLEOTIDE SEQUENCE [LARGE SCALE GENOMIC DNA]</scope>
    <source>
        <strain>AX4</strain>
    </source>
</reference>
<dbReference type="EMBL" id="AAFI02000007">
    <property type="protein sequence ID" value="EAL71452.1"/>
    <property type="molecule type" value="Genomic_DNA"/>
</dbReference>
<dbReference type="RefSeq" id="XP_645350.1">
    <property type="nucleotide sequence ID" value="XM_640258.1"/>
</dbReference>
<dbReference type="SMR" id="Q55AB6"/>
<dbReference type="FunCoup" id="Q55AB6">
    <property type="interactions" value="244"/>
</dbReference>
<dbReference type="STRING" id="44689.Q55AB6"/>
<dbReference type="PaxDb" id="44689-DDB0216273"/>
<dbReference type="EnsemblProtists" id="EAL71452">
    <property type="protein sequence ID" value="EAL71452"/>
    <property type="gene ID" value="DDB_G0272036"/>
</dbReference>
<dbReference type="GeneID" id="8618238"/>
<dbReference type="KEGG" id="ddi:DDB_G0272036"/>
<dbReference type="dictyBase" id="DDB_G0272036">
    <property type="gene designation" value="rpb10"/>
</dbReference>
<dbReference type="VEuPathDB" id="AmoebaDB:DDB_G0272036"/>
<dbReference type="eggNOG" id="KOG3497">
    <property type="taxonomic scope" value="Eukaryota"/>
</dbReference>
<dbReference type="HOGENOM" id="CLU_143122_1_0_1"/>
<dbReference type="InParanoid" id="Q55AB6"/>
<dbReference type="OMA" id="YCCRRMF"/>
<dbReference type="PhylomeDB" id="Q55AB6"/>
<dbReference type="Reactome" id="R-DDI-113418">
    <property type="pathway name" value="Formation of the Early Elongation Complex"/>
</dbReference>
<dbReference type="Reactome" id="R-DDI-674695">
    <property type="pathway name" value="RNA Polymerase II Pre-transcription Events"/>
</dbReference>
<dbReference type="Reactome" id="R-DDI-6781823">
    <property type="pathway name" value="Formation of TC-NER Pre-Incision Complex"/>
</dbReference>
<dbReference type="Reactome" id="R-DDI-6782135">
    <property type="pathway name" value="Dual incision in TC-NER"/>
</dbReference>
<dbReference type="Reactome" id="R-DDI-6782210">
    <property type="pathway name" value="Gap-filling DNA repair synthesis and ligation in TC-NER"/>
</dbReference>
<dbReference type="Reactome" id="R-DDI-6796648">
    <property type="pathway name" value="TP53 Regulates Transcription of DNA Repair Genes"/>
</dbReference>
<dbReference type="Reactome" id="R-DDI-6807505">
    <property type="pathway name" value="RNA polymerase II transcribes snRNA genes"/>
</dbReference>
<dbReference type="Reactome" id="R-DDI-72086">
    <property type="pathway name" value="mRNA Capping"/>
</dbReference>
<dbReference type="Reactome" id="R-DDI-72163">
    <property type="pathway name" value="mRNA Splicing - Major Pathway"/>
</dbReference>
<dbReference type="Reactome" id="R-DDI-72203">
    <property type="pathway name" value="Processing of Capped Intron-Containing Pre-mRNA"/>
</dbReference>
<dbReference type="Reactome" id="R-DDI-73762">
    <property type="pathway name" value="RNA Polymerase I Transcription Initiation"/>
</dbReference>
<dbReference type="Reactome" id="R-DDI-73772">
    <property type="pathway name" value="RNA Polymerase I Promoter Escape"/>
</dbReference>
<dbReference type="Reactome" id="R-DDI-73776">
    <property type="pathway name" value="RNA Polymerase II Promoter Escape"/>
</dbReference>
<dbReference type="Reactome" id="R-DDI-73779">
    <property type="pathway name" value="RNA Polymerase II Transcription Pre-Initiation And Promoter Opening"/>
</dbReference>
<dbReference type="Reactome" id="R-DDI-75953">
    <property type="pathway name" value="RNA Polymerase II Transcription Initiation"/>
</dbReference>
<dbReference type="Reactome" id="R-DDI-76042">
    <property type="pathway name" value="RNA Polymerase II Transcription Initiation And Promoter Clearance"/>
</dbReference>
<dbReference type="Reactome" id="R-DDI-76061">
    <property type="pathway name" value="RNA Polymerase III Transcription Initiation From Type 1 Promoter"/>
</dbReference>
<dbReference type="Reactome" id="R-DDI-76066">
    <property type="pathway name" value="RNA Polymerase III Transcription Initiation From Type 2 Promoter"/>
</dbReference>
<dbReference type="Reactome" id="R-DDI-77075">
    <property type="pathway name" value="RNA Pol II CTD phosphorylation and interaction with CE"/>
</dbReference>
<dbReference type="Reactome" id="R-DDI-9018519">
    <property type="pathway name" value="Estrogen-dependent gene expression"/>
</dbReference>
<dbReference type="PRO" id="PR:Q55AB6"/>
<dbReference type="Proteomes" id="UP000002195">
    <property type="component" value="Chromosome 2"/>
</dbReference>
<dbReference type="GO" id="GO:0005736">
    <property type="term" value="C:RNA polymerase I complex"/>
    <property type="evidence" value="ECO:0000250"/>
    <property type="project" value="dictyBase"/>
</dbReference>
<dbReference type="GO" id="GO:0005665">
    <property type="term" value="C:RNA polymerase II, core complex"/>
    <property type="evidence" value="ECO:0000250"/>
    <property type="project" value="dictyBase"/>
</dbReference>
<dbReference type="GO" id="GO:0005666">
    <property type="term" value="C:RNA polymerase III complex"/>
    <property type="evidence" value="ECO:0000250"/>
    <property type="project" value="dictyBase"/>
</dbReference>
<dbReference type="GO" id="GO:0003677">
    <property type="term" value="F:DNA binding"/>
    <property type="evidence" value="ECO:0007669"/>
    <property type="project" value="InterPro"/>
</dbReference>
<dbReference type="GO" id="GO:0003899">
    <property type="term" value="F:DNA-directed RNA polymerase activity"/>
    <property type="evidence" value="ECO:0000250"/>
    <property type="project" value="dictyBase"/>
</dbReference>
<dbReference type="GO" id="GO:0008270">
    <property type="term" value="F:zinc ion binding"/>
    <property type="evidence" value="ECO:0000318"/>
    <property type="project" value="GO_Central"/>
</dbReference>
<dbReference type="GO" id="GO:0006360">
    <property type="term" value="P:transcription by RNA polymerase I"/>
    <property type="evidence" value="ECO:0000250"/>
    <property type="project" value="dictyBase"/>
</dbReference>
<dbReference type="GO" id="GO:0006366">
    <property type="term" value="P:transcription by RNA polymerase II"/>
    <property type="evidence" value="ECO:0000250"/>
    <property type="project" value="dictyBase"/>
</dbReference>
<dbReference type="GO" id="GO:0006383">
    <property type="term" value="P:transcription by RNA polymerase III"/>
    <property type="evidence" value="ECO:0000250"/>
    <property type="project" value="dictyBase"/>
</dbReference>
<dbReference type="GO" id="GO:0042797">
    <property type="term" value="P:tRNA transcription by RNA polymerase III"/>
    <property type="evidence" value="ECO:0000318"/>
    <property type="project" value="GO_Central"/>
</dbReference>
<dbReference type="FunFam" id="1.10.10.60:FF:000024">
    <property type="entry name" value="DNA-directed RNA polymerases I, II, and III subunit"/>
    <property type="match status" value="1"/>
</dbReference>
<dbReference type="Gene3D" id="1.10.10.60">
    <property type="entry name" value="Homeodomain-like"/>
    <property type="match status" value="1"/>
</dbReference>
<dbReference type="InterPro" id="IPR023580">
    <property type="entry name" value="RNA_pol_su_RPB10"/>
</dbReference>
<dbReference type="InterPro" id="IPR020789">
    <property type="entry name" value="RNA_pol_suN_Zn-BS"/>
</dbReference>
<dbReference type="InterPro" id="IPR000268">
    <property type="entry name" value="RPABC5/Rpb10"/>
</dbReference>
<dbReference type="NCBIfam" id="NF003089">
    <property type="entry name" value="PRK04016.1"/>
    <property type="match status" value="1"/>
</dbReference>
<dbReference type="PANTHER" id="PTHR23431:SF3">
    <property type="entry name" value="DNA-DIRECTED RNA POLYMERASES I, II, AND III SUBUNIT RPABC5"/>
    <property type="match status" value="1"/>
</dbReference>
<dbReference type="PANTHER" id="PTHR23431">
    <property type="entry name" value="DNA-DIRECTED RNA POLYMERASES I, II, AND III SUBUNIT RPABC5 FAMILY MEMBER"/>
    <property type="match status" value="1"/>
</dbReference>
<dbReference type="Pfam" id="PF01194">
    <property type="entry name" value="RNA_pol_N"/>
    <property type="match status" value="1"/>
</dbReference>
<dbReference type="PIRSF" id="PIRSF005653">
    <property type="entry name" value="RNA_pol_N/8_sub"/>
    <property type="match status" value="1"/>
</dbReference>
<dbReference type="SUPFAM" id="SSF46924">
    <property type="entry name" value="RNA polymerase subunit RPB10"/>
    <property type="match status" value="1"/>
</dbReference>
<dbReference type="PROSITE" id="PS01112">
    <property type="entry name" value="RNA_POL_N_8KD"/>
    <property type="match status" value="1"/>
</dbReference>
<comment type="function">
    <text evidence="1">DNA-dependent RNA polymerase catalyzes the transcription of DNA into RNA using the four ribonucleoside triphosphates as substrates. Common component of RNA polymerases I, II and III which synthesize ribosomal RNA precursors, mRNA precursors and many functional non-coding RNAs, and a small RNAs, such as 5S rRNA and tRNAs, respectively. Pol II is the central component of the basal RNA polymerase II transcription machinery. Pols are composed of mobile elements that move relative to each other. In Pol II, RBP10 is part of the core element with the central large cleft (By similarity).</text>
</comment>
<comment type="subunit">
    <text evidence="1">Component of the RNA polymerase I (Pol I), RNA polymerase II (Pol II) and RNA polymerase III (Pol III) complexes.</text>
</comment>
<comment type="subcellular location">
    <subcellularLocation>
        <location evidence="1">Nucleus</location>
    </subcellularLocation>
</comment>
<comment type="similarity">
    <text evidence="3">Belongs to the archaeal Rpo10/eukaryotic RPB10 RNA polymerase subunit family.</text>
</comment>
<feature type="chain" id="PRO_0000328601" description="DNA-directed RNA polymerases I, II, and III subunit rpabc5">
    <location>
        <begin position="1"/>
        <end position="70"/>
    </location>
</feature>
<feature type="binding site" evidence="2">
    <location>
        <position position="7"/>
    </location>
    <ligand>
        <name>Zn(2+)</name>
        <dbReference type="ChEBI" id="CHEBI:29105"/>
    </ligand>
</feature>
<feature type="binding site" evidence="2">
    <location>
        <position position="10"/>
    </location>
    <ligand>
        <name>Zn(2+)</name>
        <dbReference type="ChEBI" id="CHEBI:29105"/>
    </ligand>
</feature>
<feature type="binding site" evidence="2">
    <location>
        <position position="44"/>
    </location>
    <ligand>
        <name>Zn(2+)</name>
        <dbReference type="ChEBI" id="CHEBI:29105"/>
    </ligand>
</feature>
<feature type="binding site" evidence="2">
    <location>
        <position position="45"/>
    </location>
    <ligand>
        <name>Zn(2+)</name>
        <dbReference type="ChEBI" id="CHEBI:29105"/>
    </ligand>
</feature>
<sequence length="70" mass="8013">MIIPVRCFTCGKVIGNKWDAYLSLLQIDYTEGDALDALCLKRYCCRRMLLTHVDLIEKLLNYTPLATKSS</sequence>
<organism>
    <name type="scientific">Dictyostelium discoideum</name>
    <name type="common">Social amoeba</name>
    <dbReference type="NCBI Taxonomy" id="44689"/>
    <lineage>
        <taxon>Eukaryota</taxon>
        <taxon>Amoebozoa</taxon>
        <taxon>Evosea</taxon>
        <taxon>Eumycetozoa</taxon>
        <taxon>Dictyostelia</taxon>
        <taxon>Dictyosteliales</taxon>
        <taxon>Dictyosteliaceae</taxon>
        <taxon>Dictyostelium</taxon>
    </lineage>
</organism>
<name>RPAB5_DICDI</name>
<accession>Q55AB6</accession>
<proteinExistence type="inferred from homology"/>
<keyword id="KW-0240">DNA-directed RNA polymerase</keyword>
<keyword id="KW-0479">Metal-binding</keyword>
<keyword id="KW-0539">Nucleus</keyword>
<keyword id="KW-1185">Reference proteome</keyword>
<keyword id="KW-0804">Transcription</keyword>
<keyword id="KW-0862">Zinc</keyword>
<protein>
    <recommendedName>
        <fullName>DNA-directed RNA polymerases I, II, and III subunit rpabc5</fullName>
        <shortName>RNA polymerases I, II, and III subunit ABC5</shortName>
    </recommendedName>
    <alternativeName>
        <fullName>RPB10 homolog</fullName>
    </alternativeName>
</protein>